<accession>Q256S4</accession>
<organism>
    <name type="scientific">Fragaria ananassa</name>
    <name type="common">Strawberry</name>
    <name type="synonym">Fragaria chiloensis x Fragaria virginiana</name>
    <dbReference type="NCBI Taxonomy" id="3747"/>
    <lineage>
        <taxon>Eukaryota</taxon>
        <taxon>Viridiplantae</taxon>
        <taxon>Streptophyta</taxon>
        <taxon>Embryophyta</taxon>
        <taxon>Tracheophyta</taxon>
        <taxon>Spermatophyta</taxon>
        <taxon>Magnoliopsida</taxon>
        <taxon>eudicotyledons</taxon>
        <taxon>Gunneridae</taxon>
        <taxon>Pentapetalae</taxon>
        <taxon>rosids</taxon>
        <taxon>fabids</taxon>
        <taxon>Rosales</taxon>
        <taxon>Rosaceae</taxon>
        <taxon>Rosoideae</taxon>
        <taxon>Potentilleae</taxon>
        <taxon>Fragariinae</taxon>
        <taxon>Fragaria</taxon>
    </lineage>
</organism>
<proteinExistence type="inferred from homology"/>
<name>FRA1C_FRAAN</name>
<dbReference type="EMBL" id="AM236317">
    <property type="protein sequence ID" value="CAJ85643.1"/>
    <property type="molecule type" value="Genomic_DNA"/>
</dbReference>
<dbReference type="EMBL" id="AM236318">
    <property type="protein sequence ID" value="CAJ85644.1"/>
    <property type="molecule type" value="Genomic_DNA"/>
</dbReference>
<dbReference type="SMR" id="Q256S4"/>
<dbReference type="Allergome" id="2124">
    <property type="allergen name" value="Fra a 1"/>
</dbReference>
<dbReference type="GO" id="GO:0005737">
    <property type="term" value="C:cytoplasm"/>
    <property type="evidence" value="ECO:0007669"/>
    <property type="project" value="TreeGrafter"/>
</dbReference>
<dbReference type="GO" id="GO:0005634">
    <property type="term" value="C:nucleus"/>
    <property type="evidence" value="ECO:0007669"/>
    <property type="project" value="TreeGrafter"/>
</dbReference>
<dbReference type="GO" id="GO:0010427">
    <property type="term" value="F:abscisic acid binding"/>
    <property type="evidence" value="ECO:0007669"/>
    <property type="project" value="InterPro"/>
</dbReference>
<dbReference type="GO" id="GO:0004864">
    <property type="term" value="F:protein phosphatase inhibitor activity"/>
    <property type="evidence" value="ECO:0007669"/>
    <property type="project" value="InterPro"/>
</dbReference>
<dbReference type="GO" id="GO:0038023">
    <property type="term" value="F:signaling receptor activity"/>
    <property type="evidence" value="ECO:0007669"/>
    <property type="project" value="InterPro"/>
</dbReference>
<dbReference type="GO" id="GO:0009738">
    <property type="term" value="P:abscisic acid-activated signaling pathway"/>
    <property type="evidence" value="ECO:0007669"/>
    <property type="project" value="InterPro"/>
</dbReference>
<dbReference type="GO" id="GO:0006952">
    <property type="term" value="P:defense response"/>
    <property type="evidence" value="ECO:0007669"/>
    <property type="project" value="UniProtKB-KW"/>
</dbReference>
<dbReference type="CDD" id="cd07816">
    <property type="entry name" value="Bet_v1-like"/>
    <property type="match status" value="1"/>
</dbReference>
<dbReference type="FunFam" id="3.30.530.20:FF:000007">
    <property type="entry name" value="Major pollen allergen Bet v 1-A"/>
    <property type="match status" value="1"/>
</dbReference>
<dbReference type="Gene3D" id="3.30.530.20">
    <property type="match status" value="1"/>
</dbReference>
<dbReference type="InterPro" id="IPR000916">
    <property type="entry name" value="Bet_v_I/MLP"/>
</dbReference>
<dbReference type="InterPro" id="IPR024949">
    <property type="entry name" value="Bet_v_I_allergen"/>
</dbReference>
<dbReference type="InterPro" id="IPR050279">
    <property type="entry name" value="Plant_def-hormone_signal"/>
</dbReference>
<dbReference type="InterPro" id="IPR023393">
    <property type="entry name" value="START-like_dom_sf"/>
</dbReference>
<dbReference type="PANTHER" id="PTHR31213">
    <property type="entry name" value="OS08G0374000 PROTEIN-RELATED"/>
    <property type="match status" value="1"/>
</dbReference>
<dbReference type="PANTHER" id="PTHR31213:SF55">
    <property type="entry name" value="STRESS-INDUCED PROTEIN SAM22"/>
    <property type="match status" value="1"/>
</dbReference>
<dbReference type="Pfam" id="PF00407">
    <property type="entry name" value="Bet_v_1"/>
    <property type="match status" value="1"/>
</dbReference>
<dbReference type="PRINTS" id="PR00634">
    <property type="entry name" value="BETALLERGEN"/>
</dbReference>
<dbReference type="SUPFAM" id="SSF55961">
    <property type="entry name" value="Bet v1-like"/>
    <property type="match status" value="1"/>
</dbReference>
<feature type="chain" id="PRO_0000447010" description="Major strawberry allergen Fra a 1-C">
    <location>
        <begin position="1"/>
        <end position="159"/>
    </location>
</feature>
<reference key="1">
    <citation type="journal article" date="2007" name="Mol. Immunol.">
        <title>Cloning and sequencing of the Bet v 1-homologous allergen Fra a 1 in strawberry (Fragaria ananassa) shows the presence of an intron and little variability in amino acid sequence.</title>
        <authorList>
            <person name="Musidlowska-Persson A."/>
            <person name="Alm R."/>
            <person name="Emanuelsson C."/>
        </authorList>
    </citation>
    <scope>NUCLEOTIDE SEQUENCE [GENOMIC DNA]</scope>
    <source>
        <tissue>Leaf</tissue>
    </source>
</reference>
<gene>
    <name evidence="3" type="primary">FRAA1C</name>
</gene>
<evidence type="ECO:0000250" key="1">
    <source>
        <dbReference type="UniProtKB" id="Q256S2"/>
    </source>
</evidence>
<evidence type="ECO:0000250" key="2">
    <source>
        <dbReference type="UniProtKB" id="Q5ULZ4"/>
    </source>
</evidence>
<evidence type="ECO:0000303" key="3">
    <source>
    </source>
</evidence>
<evidence type="ECO:0000305" key="4"/>
<keyword id="KW-0020">Allergen</keyword>
<keyword id="KW-0568">Pathogenesis-related protein</keyword>
<keyword id="KW-0611">Plant defense</keyword>
<protein>
    <recommendedName>
        <fullName evidence="3">Major strawberry allergen Fra a 1-C</fullName>
    </recommendedName>
    <alternativeName>
        <fullName evidence="4">Fra a 1.01C</fullName>
    </alternativeName>
    <allergenName evidence="4">Fra a 1</allergenName>
</protein>
<sequence length="159" mass="17741">MGVYTYENEFTSDIPAPKLFKAFVLDADNLIPKIAPQAVKCAEILEGDGGPGTIKKITFGEGSHYGYVKHKIHSIDKENHTYSYSLIEGDALSDNIEKIDYETKLVSAPHGTIIKTTSKYHTKGDVEIKEEHVKAGKEKASHLFKLIEGYLKDHPSEYN</sequence>
<comment type="subunit">
    <text evidence="1">Monomer.</text>
</comment>
<comment type="allergen">
    <text evidence="2">May cause an allergic reaction in human (By similarity). Binds to IgE of patients allergic to strawberry (By similarity).</text>
</comment>
<comment type="similarity">
    <text evidence="4">Belongs to the BetVI family.</text>
</comment>